<reference key="1">
    <citation type="journal article" date="2005" name="Proc. Natl. Acad. Sci. U.S.A.">
        <title>The genome of Salinibacter ruber: convergence and gene exchange among hyperhalophilic bacteria and archaea.</title>
        <authorList>
            <person name="Mongodin E.F."/>
            <person name="Nelson K.E."/>
            <person name="Daugherty S."/>
            <person name="DeBoy R.T."/>
            <person name="Wister J."/>
            <person name="Khouri H."/>
            <person name="Weidman J."/>
            <person name="Walsh D.A."/>
            <person name="Papke R.T."/>
            <person name="Sanchez Perez G."/>
            <person name="Sharma A.K."/>
            <person name="Nesbo C.L."/>
            <person name="MacLeod D."/>
            <person name="Bapteste E."/>
            <person name="Doolittle W.F."/>
            <person name="Charlebois R.L."/>
            <person name="Legault B."/>
            <person name="Rodriguez-Valera F."/>
        </authorList>
    </citation>
    <scope>NUCLEOTIDE SEQUENCE [LARGE SCALE GENOMIC DNA]</scope>
    <source>
        <strain>DSM 13855 / CECT 5946 / M31</strain>
    </source>
</reference>
<evidence type="ECO:0000255" key="1">
    <source>
        <dbReference type="HAMAP-Rule" id="MF_00528"/>
    </source>
</evidence>
<evidence type="ECO:0000305" key="2"/>
<keyword id="KW-0963">Cytoplasm</keyword>
<keyword id="KW-0378">Hydrolase</keyword>
<keyword id="KW-0546">Nucleotide metabolism</keyword>
<keyword id="KW-1185">Reference proteome</keyword>
<comment type="function">
    <text evidence="1">Nucleoside triphosphate pyrophosphatase that hydrolyzes dTTP and UTP. May have a dual role in cell division arrest and in preventing the incorporation of modified nucleotides into cellular nucleic acids.</text>
</comment>
<comment type="catalytic activity">
    <reaction evidence="1">
        <text>dTTP + H2O = dTMP + diphosphate + H(+)</text>
        <dbReference type="Rhea" id="RHEA:28534"/>
        <dbReference type="ChEBI" id="CHEBI:15377"/>
        <dbReference type="ChEBI" id="CHEBI:15378"/>
        <dbReference type="ChEBI" id="CHEBI:33019"/>
        <dbReference type="ChEBI" id="CHEBI:37568"/>
        <dbReference type="ChEBI" id="CHEBI:63528"/>
        <dbReference type="EC" id="3.6.1.9"/>
    </reaction>
</comment>
<comment type="catalytic activity">
    <reaction evidence="1">
        <text>UTP + H2O = UMP + diphosphate + H(+)</text>
        <dbReference type="Rhea" id="RHEA:29395"/>
        <dbReference type="ChEBI" id="CHEBI:15377"/>
        <dbReference type="ChEBI" id="CHEBI:15378"/>
        <dbReference type="ChEBI" id="CHEBI:33019"/>
        <dbReference type="ChEBI" id="CHEBI:46398"/>
        <dbReference type="ChEBI" id="CHEBI:57865"/>
        <dbReference type="EC" id="3.6.1.9"/>
    </reaction>
</comment>
<comment type="cofactor">
    <cofactor evidence="1">
        <name>a divalent metal cation</name>
        <dbReference type="ChEBI" id="CHEBI:60240"/>
    </cofactor>
</comment>
<comment type="subcellular location">
    <subcellularLocation>
        <location evidence="1">Cytoplasm</location>
    </subcellularLocation>
</comment>
<comment type="similarity">
    <text evidence="1">Belongs to the Maf family. YhdE subfamily.</text>
</comment>
<comment type="sequence caution" evidence="2">
    <conflict type="erroneous initiation">
        <sequence resource="EMBL-CDS" id="ABC45851"/>
    </conflict>
</comment>
<accession>Q2S4I1</accession>
<proteinExistence type="inferred from homology"/>
<feature type="chain" id="PRO_0000267418" description="dTTP/UTP pyrophosphatase">
    <location>
        <begin position="1"/>
        <end position="204"/>
    </location>
</feature>
<feature type="active site" description="Proton acceptor" evidence="1">
    <location>
        <position position="76"/>
    </location>
</feature>
<feature type="site" description="Important for substrate specificity" evidence="1">
    <location>
        <position position="19"/>
    </location>
</feature>
<feature type="site" description="Important for substrate specificity" evidence="1">
    <location>
        <position position="77"/>
    </location>
</feature>
<feature type="site" description="Important for substrate specificity" evidence="1">
    <location>
        <position position="161"/>
    </location>
</feature>
<name>NTPPA_SALRD</name>
<organism>
    <name type="scientific">Salinibacter ruber (strain DSM 13855 / M31)</name>
    <dbReference type="NCBI Taxonomy" id="309807"/>
    <lineage>
        <taxon>Bacteria</taxon>
        <taxon>Pseudomonadati</taxon>
        <taxon>Rhodothermota</taxon>
        <taxon>Rhodothermia</taxon>
        <taxon>Rhodothermales</taxon>
        <taxon>Salinibacteraceae</taxon>
        <taxon>Salinibacter</taxon>
    </lineage>
</organism>
<gene>
    <name type="ordered locus">SRU_0763</name>
</gene>
<sequence length="204" mass="21879">MNPLLQLSCPLLLASQSPRRRALLDRIDVPFEARVSPADETLAPSVAPAEAVRTLARRKARPVAADRPSALVLAADTVVAHDGEILNKPEDSSHARAMLRRLQDTSHAVYTGVSLVHAGSDRTATAVETTAVVLGPLSDAEIRAYVASGSPLDKAGGYGIQDHTAPFFVERIEGDYYNVVGLPLRRLYRTLRASFADLLEASSA</sequence>
<protein>
    <recommendedName>
        <fullName evidence="1">dTTP/UTP pyrophosphatase</fullName>
        <shortName evidence="1">dTTPase/UTPase</shortName>
        <ecNumber evidence="1">3.6.1.9</ecNumber>
    </recommendedName>
    <alternativeName>
        <fullName evidence="1">Nucleoside triphosphate pyrophosphatase</fullName>
    </alternativeName>
    <alternativeName>
        <fullName evidence="1">Nucleotide pyrophosphatase</fullName>
        <shortName evidence="1">Nucleotide PPase</shortName>
    </alternativeName>
</protein>
<dbReference type="EC" id="3.6.1.9" evidence="1"/>
<dbReference type="EMBL" id="CP000159">
    <property type="protein sequence ID" value="ABC45851.1"/>
    <property type="status" value="ALT_INIT"/>
    <property type="molecule type" value="Genomic_DNA"/>
</dbReference>
<dbReference type="RefSeq" id="YP_444900.1">
    <property type="nucleotide sequence ID" value="NC_007677.1"/>
</dbReference>
<dbReference type="SMR" id="Q2S4I1"/>
<dbReference type="STRING" id="309807.SRU_0763"/>
<dbReference type="EnsemblBacteria" id="ABC45851">
    <property type="protein sequence ID" value="ABC45851"/>
    <property type="gene ID" value="SRU_0763"/>
</dbReference>
<dbReference type="KEGG" id="sru:SRU_0763"/>
<dbReference type="PATRIC" id="fig|309807.25.peg.786"/>
<dbReference type="eggNOG" id="COG0424">
    <property type="taxonomic scope" value="Bacteria"/>
</dbReference>
<dbReference type="HOGENOM" id="CLU_040416_0_0_10"/>
<dbReference type="OrthoDB" id="9807767at2"/>
<dbReference type="Proteomes" id="UP000008674">
    <property type="component" value="Chromosome"/>
</dbReference>
<dbReference type="GO" id="GO:0005737">
    <property type="term" value="C:cytoplasm"/>
    <property type="evidence" value="ECO:0007669"/>
    <property type="project" value="UniProtKB-SubCell"/>
</dbReference>
<dbReference type="GO" id="GO:0036218">
    <property type="term" value="F:dTTP diphosphatase activity"/>
    <property type="evidence" value="ECO:0007669"/>
    <property type="project" value="RHEA"/>
</dbReference>
<dbReference type="GO" id="GO:0036221">
    <property type="term" value="F:UTP diphosphatase activity"/>
    <property type="evidence" value="ECO:0007669"/>
    <property type="project" value="RHEA"/>
</dbReference>
<dbReference type="GO" id="GO:0009117">
    <property type="term" value="P:nucleotide metabolic process"/>
    <property type="evidence" value="ECO:0007669"/>
    <property type="project" value="UniProtKB-KW"/>
</dbReference>
<dbReference type="CDD" id="cd00555">
    <property type="entry name" value="Maf"/>
    <property type="match status" value="1"/>
</dbReference>
<dbReference type="Gene3D" id="3.90.950.10">
    <property type="match status" value="1"/>
</dbReference>
<dbReference type="HAMAP" id="MF_00528">
    <property type="entry name" value="Maf"/>
    <property type="match status" value="1"/>
</dbReference>
<dbReference type="InterPro" id="IPR029001">
    <property type="entry name" value="ITPase-like_fam"/>
</dbReference>
<dbReference type="InterPro" id="IPR003697">
    <property type="entry name" value="Maf-like"/>
</dbReference>
<dbReference type="NCBIfam" id="TIGR00172">
    <property type="entry name" value="maf"/>
    <property type="match status" value="1"/>
</dbReference>
<dbReference type="PANTHER" id="PTHR43213">
    <property type="entry name" value="BIFUNCTIONAL DTTP/UTP PYROPHOSPHATASE/METHYLTRANSFERASE PROTEIN-RELATED"/>
    <property type="match status" value="1"/>
</dbReference>
<dbReference type="PANTHER" id="PTHR43213:SF5">
    <property type="entry name" value="BIFUNCTIONAL DTTP_UTP PYROPHOSPHATASE_METHYLTRANSFERASE PROTEIN-RELATED"/>
    <property type="match status" value="1"/>
</dbReference>
<dbReference type="Pfam" id="PF02545">
    <property type="entry name" value="Maf"/>
    <property type="match status" value="1"/>
</dbReference>
<dbReference type="PIRSF" id="PIRSF006305">
    <property type="entry name" value="Maf"/>
    <property type="match status" value="1"/>
</dbReference>
<dbReference type="SUPFAM" id="SSF52972">
    <property type="entry name" value="ITPase-like"/>
    <property type="match status" value="1"/>
</dbReference>